<feature type="chain" id="PRO_1000049264" description="Small ribosomal subunit protein bS16">
    <location>
        <begin position="1"/>
        <end position="82"/>
    </location>
</feature>
<proteinExistence type="inferred from homology"/>
<protein>
    <recommendedName>
        <fullName evidence="1">Small ribosomal subunit protein bS16</fullName>
    </recommendedName>
    <alternativeName>
        <fullName evidence="2">30S ribosomal protein S16</fullName>
    </alternativeName>
</protein>
<comment type="similarity">
    <text evidence="1">Belongs to the bacterial ribosomal protein bS16 family.</text>
</comment>
<accession>A5UG06</accession>
<dbReference type="EMBL" id="CP000672">
    <property type="protein sequence ID" value="ABQ99711.1"/>
    <property type="molecule type" value="Genomic_DNA"/>
</dbReference>
<dbReference type="SMR" id="A5UG06"/>
<dbReference type="KEGG" id="hiq:CGSHiGG_03635"/>
<dbReference type="HOGENOM" id="CLU_100590_5_1_6"/>
<dbReference type="Proteomes" id="UP000001990">
    <property type="component" value="Chromosome"/>
</dbReference>
<dbReference type="GO" id="GO:0005737">
    <property type="term" value="C:cytoplasm"/>
    <property type="evidence" value="ECO:0007669"/>
    <property type="project" value="UniProtKB-ARBA"/>
</dbReference>
<dbReference type="GO" id="GO:0015935">
    <property type="term" value="C:small ribosomal subunit"/>
    <property type="evidence" value="ECO:0007669"/>
    <property type="project" value="TreeGrafter"/>
</dbReference>
<dbReference type="GO" id="GO:0003735">
    <property type="term" value="F:structural constituent of ribosome"/>
    <property type="evidence" value="ECO:0007669"/>
    <property type="project" value="InterPro"/>
</dbReference>
<dbReference type="GO" id="GO:0006412">
    <property type="term" value="P:translation"/>
    <property type="evidence" value="ECO:0007669"/>
    <property type="project" value="UniProtKB-UniRule"/>
</dbReference>
<dbReference type="FunFam" id="3.30.1320.10:FF:000001">
    <property type="entry name" value="30S ribosomal protein S16"/>
    <property type="match status" value="1"/>
</dbReference>
<dbReference type="Gene3D" id="3.30.1320.10">
    <property type="match status" value="1"/>
</dbReference>
<dbReference type="HAMAP" id="MF_00385">
    <property type="entry name" value="Ribosomal_bS16"/>
    <property type="match status" value="1"/>
</dbReference>
<dbReference type="InterPro" id="IPR000307">
    <property type="entry name" value="Ribosomal_bS16"/>
</dbReference>
<dbReference type="InterPro" id="IPR020592">
    <property type="entry name" value="Ribosomal_bS16_CS"/>
</dbReference>
<dbReference type="InterPro" id="IPR023803">
    <property type="entry name" value="Ribosomal_bS16_dom_sf"/>
</dbReference>
<dbReference type="NCBIfam" id="TIGR00002">
    <property type="entry name" value="S16"/>
    <property type="match status" value="1"/>
</dbReference>
<dbReference type="PANTHER" id="PTHR12919">
    <property type="entry name" value="30S RIBOSOMAL PROTEIN S16"/>
    <property type="match status" value="1"/>
</dbReference>
<dbReference type="PANTHER" id="PTHR12919:SF20">
    <property type="entry name" value="SMALL RIBOSOMAL SUBUNIT PROTEIN BS16M"/>
    <property type="match status" value="1"/>
</dbReference>
<dbReference type="Pfam" id="PF00886">
    <property type="entry name" value="Ribosomal_S16"/>
    <property type="match status" value="1"/>
</dbReference>
<dbReference type="SUPFAM" id="SSF54565">
    <property type="entry name" value="Ribosomal protein S16"/>
    <property type="match status" value="1"/>
</dbReference>
<dbReference type="PROSITE" id="PS00732">
    <property type="entry name" value="RIBOSOMAL_S16"/>
    <property type="match status" value="1"/>
</dbReference>
<keyword id="KW-0687">Ribonucleoprotein</keyword>
<keyword id="KW-0689">Ribosomal protein</keyword>
<reference key="1">
    <citation type="journal article" date="2007" name="Genome Biol.">
        <title>Characterization and modeling of the Haemophilus influenzae core and supragenomes based on the complete genomic sequences of Rd and 12 clinical nontypeable strains.</title>
        <authorList>
            <person name="Hogg J.S."/>
            <person name="Hu F.Z."/>
            <person name="Janto B."/>
            <person name="Boissy R."/>
            <person name="Hayes J."/>
            <person name="Keefe R."/>
            <person name="Post J.C."/>
            <person name="Ehrlich G.D."/>
        </authorList>
    </citation>
    <scope>NUCLEOTIDE SEQUENCE [LARGE SCALE GENOMIC DNA]</scope>
    <source>
        <strain>PittGG</strain>
    </source>
</reference>
<sequence>MVTIRLSRGGAKKRPFYQIVVADSRSPRDGRFIERVGFFNPIAQGNAERLRINLERVNHWVAQGASLSDRVASLVKEAQKAA</sequence>
<name>RS16_HAEIG</name>
<evidence type="ECO:0000255" key="1">
    <source>
        <dbReference type="HAMAP-Rule" id="MF_00385"/>
    </source>
</evidence>
<evidence type="ECO:0000305" key="2"/>
<gene>
    <name evidence="1" type="primary">rpsP</name>
    <name type="ordered locus">CGSHiGG_03635</name>
</gene>
<organism>
    <name type="scientific">Haemophilus influenzae (strain PittGG)</name>
    <dbReference type="NCBI Taxonomy" id="374931"/>
    <lineage>
        <taxon>Bacteria</taxon>
        <taxon>Pseudomonadati</taxon>
        <taxon>Pseudomonadota</taxon>
        <taxon>Gammaproteobacteria</taxon>
        <taxon>Pasteurellales</taxon>
        <taxon>Pasteurellaceae</taxon>
        <taxon>Haemophilus</taxon>
    </lineage>
</organism>